<accession>Q5RC07</accession>
<keyword id="KW-0966">Cell projection</keyword>
<keyword id="KW-0963">Cytoplasm</keyword>
<keyword id="KW-0597">Phosphoprotein</keyword>
<keyword id="KW-1185">Reference proteome</keyword>
<keyword id="KW-0728">SH3 domain</keyword>
<feature type="chain" id="PRO_0000239086" description="Epidermal growth factor receptor kinase substrate 8-like protein 2">
    <location>
        <begin position="1"/>
        <end position="716"/>
    </location>
</feature>
<feature type="domain" description="PID">
    <location>
        <begin position="46"/>
        <end position="202"/>
    </location>
</feature>
<feature type="domain" description="SH3" evidence="3">
    <location>
        <begin position="493"/>
        <end position="552"/>
    </location>
</feature>
<feature type="region of interest" description="Disordered" evidence="4">
    <location>
        <begin position="1"/>
        <end position="25"/>
    </location>
</feature>
<feature type="region of interest" description="Disordered" evidence="4">
    <location>
        <begin position="182"/>
        <end position="243"/>
    </location>
</feature>
<feature type="region of interest" description="Disordered" evidence="4">
    <location>
        <begin position="449"/>
        <end position="488"/>
    </location>
</feature>
<feature type="compositionally biased region" description="Pro residues" evidence="4">
    <location>
        <begin position="199"/>
        <end position="208"/>
    </location>
</feature>
<feature type="compositionally biased region" description="Basic and acidic residues" evidence="4">
    <location>
        <begin position="234"/>
        <end position="243"/>
    </location>
</feature>
<feature type="compositionally biased region" description="Polar residues" evidence="4">
    <location>
        <begin position="452"/>
        <end position="467"/>
    </location>
</feature>
<feature type="modified residue" description="Phosphoserine" evidence="2">
    <location>
        <position position="240"/>
    </location>
</feature>
<feature type="modified residue" description="Phosphothreonine" evidence="1">
    <location>
        <position position="304"/>
    </location>
</feature>
<feature type="modified residue" description="Phosphoserine" evidence="2">
    <location>
        <position position="450"/>
    </location>
</feature>
<feature type="modified residue" description="Phosphothreonine" evidence="2">
    <location>
        <position position="470"/>
    </location>
</feature>
<feature type="modified residue" description="Phosphoserine" evidence="2">
    <location>
        <position position="571"/>
    </location>
</feature>
<comment type="function">
    <text evidence="1 2">Stimulates guanine exchange activity of SOS1. May play a role in membrane ruffling and remodeling of the actin cytoskeleton (By similarity). In the cochlea, is required for stereocilia maintenance in adult hair cells (By similarity).</text>
</comment>
<comment type="subunit">
    <text evidence="2">Interacts with ABI1. Part of a complex that contains SOS1, ABI1 and EPS8L2. Associates with F-actin (By similarity).</text>
</comment>
<comment type="subcellular location">
    <subcellularLocation>
        <location evidence="2">Cytoplasm</location>
    </subcellularLocation>
    <subcellularLocation>
        <location evidence="1">Cell projection</location>
        <location evidence="1">Stereocilium</location>
    </subcellularLocation>
    <text evidence="1">Localizes at the tips of the stereocilia of the inner and outer hair cells.</text>
</comment>
<comment type="similarity">
    <text evidence="5">Belongs to the EPS8 family.</text>
</comment>
<organism>
    <name type="scientific">Pongo abelii</name>
    <name type="common">Sumatran orangutan</name>
    <name type="synonym">Pongo pygmaeus abelii</name>
    <dbReference type="NCBI Taxonomy" id="9601"/>
    <lineage>
        <taxon>Eukaryota</taxon>
        <taxon>Metazoa</taxon>
        <taxon>Chordata</taxon>
        <taxon>Craniata</taxon>
        <taxon>Vertebrata</taxon>
        <taxon>Euteleostomi</taxon>
        <taxon>Mammalia</taxon>
        <taxon>Eutheria</taxon>
        <taxon>Euarchontoglires</taxon>
        <taxon>Primates</taxon>
        <taxon>Haplorrhini</taxon>
        <taxon>Catarrhini</taxon>
        <taxon>Hominidae</taxon>
        <taxon>Pongo</taxon>
    </lineage>
</organism>
<sequence>MSQSGTMSCCPGATNGSLGRSDGVAKMSPKDLFEQRKKYSNSNVIMHETSQYHVQHLATFIMDKSEAITSVDDAIRKLVQLSSKEKIWTQEMLLQVNDQSLRLLDIESQEELENFPLPTVQRSQTVLNQLRYPSVLLLVCQDSEQSKPDVHFFHCDEVEAELVHEDIESALADCRLGKKMRPQTLKGHQEKIRQRQSILPPPQGPAPIPFQHRGGDSPQAKNRVGPQVPLSEPGFRRRESQEEEPRALLAQKIEKETQILNCALDDIEWFVARLQKAAEAFKQLNQRKKGKKKGKKAPAEGVLTLRARPPSEGEFIDCFQKTKLAINLLAKLQKHIQNPSAAELVHFLFGPLDLIVNTCGGPDIARSVSCPLLSRDAVDFLRGHLVPKEMSLWESLGESWMRPRSEWPWEPQVPLYVPKFHSGWEPPMDVLQEAPWEVEGLASAPIEEVSPVSRQSIRNSQKHSPTSEPTPPGDALPPVSSPHTHRGYQPTPAMAKYVKILYDFTARNANELSVLKDEVLEVLEDGRQWWKLRSRSGQAGYVPCNILGEARPEDAGAPFEQAGQKYWGPASPTHKLPPSFPGNKDELMQHMDEVNDELIRKISNIRAQPQRHFRVERSQPVSQPLTYESGPDEVRAWLEAKAFSPRIVENLGILTGPQLFSLNKEELKKVCGEEGVRVYSQLTVQKAFLEKQQSGSELEELMNKFHSMNQRRGEDS</sequence>
<name>ES8L2_PONAB</name>
<dbReference type="EMBL" id="CR858475">
    <property type="protein sequence ID" value="CAH90703.1"/>
    <property type="molecule type" value="mRNA"/>
</dbReference>
<dbReference type="RefSeq" id="NP_001125388.1">
    <property type="nucleotide sequence ID" value="NM_001131916.1"/>
</dbReference>
<dbReference type="RefSeq" id="XP_024110221.1">
    <property type="nucleotide sequence ID" value="XM_024254453.3"/>
</dbReference>
<dbReference type="RefSeq" id="XP_063583944.1">
    <property type="nucleotide sequence ID" value="XM_063727874.1"/>
</dbReference>
<dbReference type="RefSeq" id="XP_063583946.1">
    <property type="nucleotide sequence ID" value="XM_063727876.1"/>
</dbReference>
<dbReference type="RefSeq" id="XP_063583947.1">
    <property type="nucleotide sequence ID" value="XM_063727877.1"/>
</dbReference>
<dbReference type="SMR" id="Q5RC07"/>
<dbReference type="FunCoup" id="Q5RC07">
    <property type="interactions" value="78"/>
</dbReference>
<dbReference type="STRING" id="9601.ENSPPYP00000023859"/>
<dbReference type="GeneID" id="100172293"/>
<dbReference type="KEGG" id="pon:100172293"/>
<dbReference type="CTD" id="64787"/>
<dbReference type="eggNOG" id="KOG0825">
    <property type="taxonomic scope" value="Eukaryota"/>
</dbReference>
<dbReference type="eggNOG" id="KOG3557">
    <property type="taxonomic scope" value="Eukaryota"/>
</dbReference>
<dbReference type="InParanoid" id="Q5RC07"/>
<dbReference type="OrthoDB" id="4680325at2759"/>
<dbReference type="Proteomes" id="UP000001595">
    <property type="component" value="Unplaced"/>
</dbReference>
<dbReference type="GO" id="GO:0005737">
    <property type="term" value="C:cytoplasm"/>
    <property type="evidence" value="ECO:0007669"/>
    <property type="project" value="UniProtKB-SubCell"/>
</dbReference>
<dbReference type="GO" id="GO:0032587">
    <property type="term" value="C:ruffle membrane"/>
    <property type="evidence" value="ECO:0007669"/>
    <property type="project" value="TreeGrafter"/>
</dbReference>
<dbReference type="GO" id="GO:0032421">
    <property type="term" value="C:stereocilium bundle"/>
    <property type="evidence" value="ECO:0000250"/>
    <property type="project" value="UniProtKB"/>
</dbReference>
<dbReference type="GO" id="GO:0032426">
    <property type="term" value="C:stereocilium tip"/>
    <property type="evidence" value="ECO:0000250"/>
    <property type="project" value="UniProtKB"/>
</dbReference>
<dbReference type="GO" id="GO:0031982">
    <property type="term" value="C:vesicle"/>
    <property type="evidence" value="ECO:0007669"/>
    <property type="project" value="TreeGrafter"/>
</dbReference>
<dbReference type="GO" id="GO:0003779">
    <property type="term" value="F:actin binding"/>
    <property type="evidence" value="ECO:0007669"/>
    <property type="project" value="TreeGrafter"/>
</dbReference>
<dbReference type="GO" id="GO:1900029">
    <property type="term" value="P:positive regulation of ruffle assembly"/>
    <property type="evidence" value="ECO:0007669"/>
    <property type="project" value="TreeGrafter"/>
</dbReference>
<dbReference type="GO" id="GO:0035023">
    <property type="term" value="P:regulation of Rho protein signal transduction"/>
    <property type="evidence" value="ECO:0007669"/>
    <property type="project" value="TreeGrafter"/>
</dbReference>
<dbReference type="GO" id="GO:0007266">
    <property type="term" value="P:Rho protein signal transduction"/>
    <property type="evidence" value="ECO:0007669"/>
    <property type="project" value="TreeGrafter"/>
</dbReference>
<dbReference type="GO" id="GO:0007605">
    <property type="term" value="P:sensory perception of sound"/>
    <property type="evidence" value="ECO:0000250"/>
    <property type="project" value="UniProtKB"/>
</dbReference>
<dbReference type="CDD" id="cd01210">
    <property type="entry name" value="PTB_EPS8"/>
    <property type="match status" value="1"/>
</dbReference>
<dbReference type="CDD" id="cd09540">
    <property type="entry name" value="SAM_EPS8-like"/>
    <property type="match status" value="1"/>
</dbReference>
<dbReference type="CDD" id="cd11764">
    <property type="entry name" value="SH3_Eps8"/>
    <property type="match status" value="1"/>
</dbReference>
<dbReference type="FunFam" id="1.10.150.50:FF:000023">
    <property type="entry name" value="Epidermal growth factor receptor kinase substrate 8"/>
    <property type="match status" value="1"/>
</dbReference>
<dbReference type="FunFam" id="2.30.29.30:FF:000218">
    <property type="entry name" value="Epidermal growth factor receptor kinase substrate 8-like 2"/>
    <property type="match status" value="1"/>
</dbReference>
<dbReference type="FunFam" id="2.30.30.40:FF:000180">
    <property type="entry name" value="epidermal growth factor receptor kinase substrate 8-like protein 2"/>
    <property type="match status" value="1"/>
</dbReference>
<dbReference type="Gene3D" id="2.30.29.30">
    <property type="entry name" value="Pleckstrin-homology domain (PH domain)/Phosphotyrosine-binding domain (PTB)"/>
    <property type="match status" value="1"/>
</dbReference>
<dbReference type="Gene3D" id="2.30.30.40">
    <property type="entry name" value="SH3 Domains"/>
    <property type="match status" value="1"/>
</dbReference>
<dbReference type="Gene3D" id="1.10.150.50">
    <property type="entry name" value="Transcription Factor, Ets-1"/>
    <property type="match status" value="1"/>
</dbReference>
<dbReference type="InterPro" id="IPR039801">
    <property type="entry name" value="EPS8-like"/>
</dbReference>
<dbReference type="InterPro" id="IPR055093">
    <property type="entry name" value="EPS8_2nd"/>
</dbReference>
<dbReference type="InterPro" id="IPR033928">
    <property type="entry name" value="EPS8_PTB"/>
</dbReference>
<dbReference type="InterPro" id="IPR035462">
    <property type="entry name" value="Eps8_SH3"/>
</dbReference>
<dbReference type="InterPro" id="IPR011993">
    <property type="entry name" value="PH-like_dom_sf"/>
</dbReference>
<dbReference type="InterPro" id="IPR013625">
    <property type="entry name" value="PTB"/>
</dbReference>
<dbReference type="InterPro" id="IPR006020">
    <property type="entry name" value="PTB/PI_dom"/>
</dbReference>
<dbReference type="InterPro" id="IPR013761">
    <property type="entry name" value="SAM/pointed_sf"/>
</dbReference>
<dbReference type="InterPro" id="IPR041418">
    <property type="entry name" value="SAM_3"/>
</dbReference>
<dbReference type="InterPro" id="IPR036028">
    <property type="entry name" value="SH3-like_dom_sf"/>
</dbReference>
<dbReference type="InterPro" id="IPR001452">
    <property type="entry name" value="SH3_domain"/>
</dbReference>
<dbReference type="PANTHER" id="PTHR12287:SF20">
    <property type="entry name" value="EPIDERMAL GROWTH FACTOR RECEPTOR KINASE SUBSTRATE 8-LIKE PROTEIN 2"/>
    <property type="match status" value="1"/>
</dbReference>
<dbReference type="PANTHER" id="PTHR12287">
    <property type="entry name" value="EPIDERMAL GROWTH FACTOR RECEPTOR KINASE SUBSTRATE EPS8-RELATED PROTEIN"/>
    <property type="match status" value="1"/>
</dbReference>
<dbReference type="Pfam" id="PF22975">
    <property type="entry name" value="EPS8_2nd"/>
    <property type="match status" value="1"/>
</dbReference>
<dbReference type="Pfam" id="PF08416">
    <property type="entry name" value="PTB"/>
    <property type="match status" value="1"/>
</dbReference>
<dbReference type="Pfam" id="PF18016">
    <property type="entry name" value="SAM_3"/>
    <property type="match status" value="1"/>
</dbReference>
<dbReference type="Pfam" id="PF00018">
    <property type="entry name" value="SH3_1"/>
    <property type="match status" value="1"/>
</dbReference>
<dbReference type="SMART" id="SM00462">
    <property type="entry name" value="PTB"/>
    <property type="match status" value="1"/>
</dbReference>
<dbReference type="SMART" id="SM00326">
    <property type="entry name" value="SH3"/>
    <property type="match status" value="1"/>
</dbReference>
<dbReference type="SUPFAM" id="SSF50729">
    <property type="entry name" value="PH domain-like"/>
    <property type="match status" value="1"/>
</dbReference>
<dbReference type="SUPFAM" id="SSF50044">
    <property type="entry name" value="SH3-domain"/>
    <property type="match status" value="1"/>
</dbReference>
<dbReference type="PROSITE" id="PS50002">
    <property type="entry name" value="SH3"/>
    <property type="match status" value="1"/>
</dbReference>
<protein>
    <recommendedName>
        <fullName>Epidermal growth factor receptor kinase substrate 8-like protein 2</fullName>
        <shortName>EPS8-like protein 2</shortName>
    </recommendedName>
    <alternativeName>
        <fullName>Epidermal growth factor receptor pathway substrate 8-related protein 2</fullName>
        <shortName>EPS8-related protein 2</shortName>
    </alternativeName>
</protein>
<proteinExistence type="evidence at transcript level"/>
<gene>
    <name type="primary">EPS8L2</name>
    <name type="synonym">EPS8R2</name>
</gene>
<evidence type="ECO:0000250" key="1">
    <source>
        <dbReference type="UniProtKB" id="Q99K30"/>
    </source>
</evidence>
<evidence type="ECO:0000250" key="2">
    <source>
        <dbReference type="UniProtKB" id="Q9H6S3"/>
    </source>
</evidence>
<evidence type="ECO:0000255" key="3">
    <source>
        <dbReference type="PROSITE-ProRule" id="PRU00192"/>
    </source>
</evidence>
<evidence type="ECO:0000256" key="4">
    <source>
        <dbReference type="SAM" id="MobiDB-lite"/>
    </source>
</evidence>
<evidence type="ECO:0000305" key="5"/>
<reference key="1">
    <citation type="submission" date="2004-11" db="EMBL/GenBank/DDBJ databases">
        <authorList>
            <consortium name="The German cDNA consortium"/>
        </authorList>
    </citation>
    <scope>NUCLEOTIDE SEQUENCE [LARGE SCALE MRNA]</scope>
    <source>
        <tissue>Kidney</tissue>
    </source>
</reference>